<feature type="signal peptide" evidence="2">
    <location>
        <begin position="1"/>
        <end position="22"/>
    </location>
</feature>
<feature type="chain" id="PRO_0000407525" description="Vacuolar protein sorting/targeting protein 10">
    <location>
        <begin position="23"/>
        <end position="1487"/>
    </location>
</feature>
<feature type="topological domain" description="Lumenal" evidence="2">
    <location>
        <begin position="23"/>
        <end position="1356"/>
    </location>
</feature>
<feature type="transmembrane region" description="Helical" evidence="2">
    <location>
        <begin position="1357"/>
        <end position="1377"/>
    </location>
</feature>
<feature type="topological domain" description="Cytoplasmic" evidence="2">
    <location>
        <begin position="1378"/>
        <end position="1404"/>
    </location>
</feature>
<feature type="transmembrane region" description="Helical" evidence="2">
    <location>
        <begin position="1405"/>
        <end position="1425"/>
    </location>
</feature>
<feature type="topological domain" description="Lumenal" evidence="2">
    <location>
        <begin position="1426"/>
        <end position="1487"/>
    </location>
</feature>
<feature type="repeat" description="BNR 1">
    <location>
        <begin position="61"/>
        <end position="71"/>
    </location>
</feature>
<feature type="repeat" description="BNR 2">
    <location>
        <begin position="378"/>
        <end position="387"/>
    </location>
</feature>
<feature type="repeat" description="BNR 3">
    <location>
        <begin position="438"/>
        <end position="448"/>
    </location>
</feature>
<feature type="repeat" description="BNR 4">
    <location>
        <begin position="479"/>
        <end position="489"/>
    </location>
</feature>
<feature type="repeat" description="BNR 5">
    <location>
        <begin position="721"/>
        <end position="731"/>
    </location>
</feature>
<feature type="repeat" description="BNR 6">
    <location>
        <begin position="816"/>
        <end position="826"/>
    </location>
</feature>
<feature type="repeat" description="BNR 7">
    <location>
        <begin position="1104"/>
        <end position="1114"/>
    </location>
</feature>
<feature type="repeat" description="BNR 8">
    <location>
        <begin position="1145"/>
        <end position="1155"/>
    </location>
</feature>
<feature type="glycosylation site" description="N-linked (GlcNAc...) asparagine" evidence="2">
    <location>
        <position position="300"/>
    </location>
</feature>
<feature type="glycosylation site" description="N-linked (GlcNAc...) asparagine" evidence="2">
    <location>
        <position position="324"/>
    </location>
</feature>
<feature type="glycosylation site" description="N-linked (GlcNAc...) asparagine" evidence="2">
    <location>
        <position position="967"/>
    </location>
</feature>
<feature type="glycosylation site" description="N-linked (GlcNAc...) asparagine" evidence="2">
    <location>
        <position position="1265"/>
    </location>
</feature>
<accession>A1DAY6</accession>
<protein>
    <recommendedName>
        <fullName>Vacuolar protein sorting/targeting protein 10</fullName>
    </recommendedName>
    <alternativeName>
        <fullName>Carboxypeptidase Y receptor</fullName>
        <shortName>CPY receptor</shortName>
    </alternativeName>
    <alternativeName>
        <fullName>Sortilin vps10</fullName>
    </alternativeName>
    <alternativeName>
        <fullName>Vacuolar carboxypeptidase sorting receptor vps10</fullName>
    </alternativeName>
</protein>
<sequence length="1487" mass="166455">MITRWLLITSFLALAILSLSSAAKKSEPEITPSSFDNEPFSLFYFEDTETILMNTRDGNLFRSFDGGKGWEQVDDPNGKMKKGVRSIWQHPFDKNRAYALGANRRHWVTKDQAKTWESFEVDGYAATQHEPLIFHGWDSSKVIFQSDECMGRFCIVKSYYSTDDFKTVSPLRVSAGGCAWAVGHPQFAEGLNLEDELRDRVLCIVPGLKVPSAHANRLVYSDDFFRSDAEGTELNIQQGRPVSGILSAAAVKKFFVTAAKSQGTNELALYVTLDTKAWHRADFGGHRVEQDGYTLLESTNYSMQVDVLTSPSSNTGILFTSNSNGTYFTRNVEHTNRDRFGHVDFEKIADIQGIVLVNTVKNWDKVGSENEKKVVSSISFDDGRTFQSLKVGDKQLHLHSVTTFANTGRVFSSPAPGLVMGVGNTGDHLKKYSEGSLYVSDDAGVTWRHALDGPFKYEFGDQGSVIMAVSDKGTTDEIQFSIDHGKEWHSTKLQHKIYPKLLTTTPDSTSLTFLLVGSEESSGTKHVVYSIDFRGLHERKCEKDDFEKWAARLNENGEPDCLMGHQQFFNRRKANADCFVDEEFKDPQPIFEPCKCSFEDFECDFNFVRSEDGKSCVPAAPLVPPVGRCQKQTDTFMGPSGWRLIPGNTCTREGGENLDKDVERPCKDVVSAPSHDKLMAQKQVFNDARQFSEQYYYLERQASSSGDDETVIMLTSEGEFWVSHDHGKNWEQPLKGVKIAAIVPHPYYSDGAFLLTRDKQAFWTVDRAYTFKSFEAPIPPNQEGLPVLSFHPQYKDWLIWTGAVDCAHGDCHSDAYFSKNRGENWDLLLRYVGKCEFESRENRPGSEKLIFCQQYENENKKNHLQLLSSENLFSDSHVHFNDAIRYATMSEYIIVASRDPDNPDSLVASVSVDGRTFARAEFPPNVDVPVKTAFTVLDSSTHAVFLHVTVSDVKGAEHGSIIKSNSNGTSYVLSLNAASRNEWGYVDFEKMQGLEGVAVVNIISNVEAVLKKGPTAKKLKTMITHNDGGQWMLLPPPAKDADGKNFGCSVKGGKGSGQCSLHLHGYTERRDPRDTFSSGSAIGLMMGIGNVGAHLSGKDEADTFMTRDGGITWKSVKKGRYMWEYGDSGSVIVIVPELRPTKVLYYSLDEGDNWEPYEFSEVEMHIYRLSTVPSDTSKNFLLWGKEVESNRLATINVDFSGLRKKSCNLVENGQESDDYYLWEPKHPFQEDNCLFGHVEQYHRKKPSSQCWNNWREPHVHSIGRNCTCTRADYECNYNYEPQNDGSCALVPGLPKPDALAVCREDPDRVEYWEPTAYRRIPQTTCAGGLILDHVVSKPCPSKEKEYEKKHGISGTGLFFAIMIPIVAAAGVGYYVYAKWDGKFGQIRLGENAGTYEGLLSRESPIVTVPIAVIAGIVAVIRALPLLAMSLWRSASGYVRLGRNRAYSRPYASRGSFAARRGDYTSVVDDEDELLGVDDAEIDEDDEL</sequence>
<proteinExistence type="inferred from homology"/>
<reference key="1">
    <citation type="journal article" date="2008" name="PLoS Genet.">
        <title>Genomic islands in the pathogenic filamentous fungus Aspergillus fumigatus.</title>
        <authorList>
            <person name="Fedorova N.D."/>
            <person name="Khaldi N."/>
            <person name="Joardar V.S."/>
            <person name="Maiti R."/>
            <person name="Amedeo P."/>
            <person name="Anderson M.J."/>
            <person name="Crabtree J."/>
            <person name="Silva J.C."/>
            <person name="Badger J.H."/>
            <person name="Albarraq A."/>
            <person name="Angiuoli S."/>
            <person name="Bussey H."/>
            <person name="Bowyer P."/>
            <person name="Cotty P.J."/>
            <person name="Dyer P.S."/>
            <person name="Egan A."/>
            <person name="Galens K."/>
            <person name="Fraser-Liggett C.M."/>
            <person name="Haas B.J."/>
            <person name="Inman J.M."/>
            <person name="Kent R."/>
            <person name="Lemieux S."/>
            <person name="Malavazi I."/>
            <person name="Orvis J."/>
            <person name="Roemer T."/>
            <person name="Ronning C.M."/>
            <person name="Sundaram J.P."/>
            <person name="Sutton G."/>
            <person name="Turner G."/>
            <person name="Venter J.C."/>
            <person name="White O.R."/>
            <person name="Whitty B.R."/>
            <person name="Youngman P."/>
            <person name="Wolfe K.H."/>
            <person name="Goldman G.H."/>
            <person name="Wortman J.R."/>
            <person name="Jiang B."/>
            <person name="Denning D.W."/>
            <person name="Nierman W.C."/>
        </authorList>
    </citation>
    <scope>NUCLEOTIDE SEQUENCE [LARGE SCALE GENOMIC DNA]</scope>
    <source>
        <strain>ATCC 1020 / DSM 3700 / CBS 544.65 / FGSC A1164 / JCM 1740 / NRRL 181 / WB 181</strain>
    </source>
</reference>
<gene>
    <name type="primary">vps10</name>
    <name type="ORF">NFIA_096480</name>
</gene>
<keyword id="KW-0325">Glycoprotein</keyword>
<keyword id="KW-0333">Golgi apparatus</keyword>
<keyword id="KW-0472">Membrane</keyword>
<keyword id="KW-0653">Protein transport</keyword>
<keyword id="KW-0675">Receptor</keyword>
<keyword id="KW-1185">Reference proteome</keyword>
<keyword id="KW-0677">Repeat</keyword>
<keyword id="KW-0732">Signal</keyword>
<keyword id="KW-0812">Transmembrane</keyword>
<keyword id="KW-1133">Transmembrane helix</keyword>
<keyword id="KW-0813">Transport</keyword>
<evidence type="ECO:0000250" key="1"/>
<evidence type="ECO:0000255" key="2"/>
<evidence type="ECO:0000305" key="3"/>
<organism>
    <name type="scientific">Neosartorya fischeri (strain ATCC 1020 / DSM 3700 / CBS 544.65 / FGSC A1164 / JCM 1740 / NRRL 181 / WB 181)</name>
    <name type="common">Aspergillus fischerianus</name>
    <dbReference type="NCBI Taxonomy" id="331117"/>
    <lineage>
        <taxon>Eukaryota</taxon>
        <taxon>Fungi</taxon>
        <taxon>Dikarya</taxon>
        <taxon>Ascomycota</taxon>
        <taxon>Pezizomycotina</taxon>
        <taxon>Eurotiomycetes</taxon>
        <taxon>Eurotiomycetidae</taxon>
        <taxon>Eurotiales</taxon>
        <taxon>Aspergillaceae</taxon>
        <taxon>Aspergillus</taxon>
        <taxon>Aspergillus subgen. Fumigati</taxon>
    </lineage>
</organism>
<name>VPS10_NEOFI</name>
<dbReference type="EMBL" id="DS027694">
    <property type="protein sequence ID" value="EAW20026.1"/>
    <property type="molecule type" value="Genomic_DNA"/>
</dbReference>
<dbReference type="RefSeq" id="XP_001261923.1">
    <property type="nucleotide sequence ID" value="XM_001261922.1"/>
</dbReference>
<dbReference type="SMR" id="A1DAY6"/>
<dbReference type="STRING" id="331117.A1DAY6"/>
<dbReference type="GlyCosmos" id="A1DAY6">
    <property type="glycosylation" value="4 sites, No reported glycans"/>
</dbReference>
<dbReference type="EnsemblFungi" id="EAW20026">
    <property type="protein sequence ID" value="EAW20026"/>
    <property type="gene ID" value="NFIA_096480"/>
</dbReference>
<dbReference type="GeneID" id="4588488"/>
<dbReference type="KEGG" id="nfi:NFIA_096480"/>
<dbReference type="VEuPathDB" id="FungiDB:NFIA_096480"/>
<dbReference type="eggNOG" id="KOG3511">
    <property type="taxonomic scope" value="Eukaryota"/>
</dbReference>
<dbReference type="HOGENOM" id="CLU_000700_0_0_1"/>
<dbReference type="OMA" id="ATMSEFI"/>
<dbReference type="OrthoDB" id="443634at2759"/>
<dbReference type="Proteomes" id="UP000006702">
    <property type="component" value="Unassembled WGS sequence"/>
</dbReference>
<dbReference type="GO" id="GO:0005829">
    <property type="term" value="C:cytosol"/>
    <property type="evidence" value="ECO:0007669"/>
    <property type="project" value="GOC"/>
</dbReference>
<dbReference type="GO" id="GO:0005794">
    <property type="term" value="C:Golgi apparatus"/>
    <property type="evidence" value="ECO:0007669"/>
    <property type="project" value="UniProtKB-SubCell"/>
</dbReference>
<dbReference type="GO" id="GO:0016020">
    <property type="term" value="C:membrane"/>
    <property type="evidence" value="ECO:0007669"/>
    <property type="project" value="UniProtKB-KW"/>
</dbReference>
<dbReference type="GO" id="GO:0006895">
    <property type="term" value="P:Golgi to endosome transport"/>
    <property type="evidence" value="ECO:0007669"/>
    <property type="project" value="TreeGrafter"/>
</dbReference>
<dbReference type="GO" id="GO:0006896">
    <property type="term" value="P:Golgi to vacuole transport"/>
    <property type="evidence" value="ECO:0007669"/>
    <property type="project" value="TreeGrafter"/>
</dbReference>
<dbReference type="GO" id="GO:0006623">
    <property type="term" value="P:protein targeting to vacuole"/>
    <property type="evidence" value="ECO:0007669"/>
    <property type="project" value="TreeGrafter"/>
</dbReference>
<dbReference type="CDD" id="cd15482">
    <property type="entry name" value="Sialidase_non-viral"/>
    <property type="match status" value="1"/>
</dbReference>
<dbReference type="FunFam" id="2.10.70.80:FF:000006">
    <property type="entry name" value="Sortilin"/>
    <property type="match status" value="1"/>
</dbReference>
<dbReference type="FunFam" id="2.130.10.10:FF:000676">
    <property type="entry name" value="Sortilin"/>
    <property type="match status" value="1"/>
</dbReference>
<dbReference type="FunFam" id="3.30.60.270:FF:000005">
    <property type="entry name" value="Sortilin"/>
    <property type="match status" value="2"/>
</dbReference>
<dbReference type="FunFam" id="2.10.70.80:FF:000001">
    <property type="entry name" value="Sortilin-related VPS10 domain-containing receptor 1"/>
    <property type="match status" value="1"/>
</dbReference>
<dbReference type="Gene3D" id="2.10.70.80">
    <property type="match status" value="2"/>
</dbReference>
<dbReference type="Gene3D" id="3.30.60.270">
    <property type="match status" value="2"/>
</dbReference>
<dbReference type="Gene3D" id="2.130.10.10">
    <property type="entry name" value="YVTN repeat-like/Quinoprotein amine dehydrogenase"/>
    <property type="match status" value="1"/>
</dbReference>
<dbReference type="InterPro" id="IPR036278">
    <property type="entry name" value="Sialidase_sf"/>
</dbReference>
<dbReference type="InterPro" id="IPR031777">
    <property type="entry name" value="Sortilin_C"/>
</dbReference>
<dbReference type="InterPro" id="IPR031778">
    <property type="entry name" value="Sortilin_N"/>
</dbReference>
<dbReference type="InterPro" id="IPR006581">
    <property type="entry name" value="VPS10"/>
</dbReference>
<dbReference type="InterPro" id="IPR050310">
    <property type="entry name" value="VPS10-sortilin"/>
</dbReference>
<dbReference type="InterPro" id="IPR015943">
    <property type="entry name" value="WD40/YVTN_repeat-like_dom_sf"/>
</dbReference>
<dbReference type="PANTHER" id="PTHR12106">
    <property type="entry name" value="SORTILIN RELATED"/>
    <property type="match status" value="1"/>
</dbReference>
<dbReference type="PANTHER" id="PTHR12106:SF27">
    <property type="entry name" value="SORTILIN-RELATED RECEPTOR"/>
    <property type="match status" value="1"/>
</dbReference>
<dbReference type="Pfam" id="PF15902">
    <property type="entry name" value="Sortilin-Vps10"/>
    <property type="match status" value="2"/>
</dbReference>
<dbReference type="Pfam" id="PF15901">
    <property type="entry name" value="Sortilin_C"/>
    <property type="match status" value="2"/>
</dbReference>
<dbReference type="SMART" id="SM00602">
    <property type="entry name" value="VPS10"/>
    <property type="match status" value="2"/>
</dbReference>
<dbReference type="SUPFAM" id="SSF110296">
    <property type="entry name" value="Oligoxyloglucan reducing end-specific cellobiohydrolase"/>
    <property type="match status" value="1"/>
</dbReference>
<dbReference type="SUPFAM" id="SSF50939">
    <property type="entry name" value="Sialidases"/>
    <property type="match status" value="1"/>
</dbReference>
<comment type="function">
    <text evidence="1">Functions as a sorting receptor in the Golgi compartment required for the intracellular sorting and delivery of soluble vacuolar proteins, like carboxypeptidase Y (CPY) and proteinase A. Executes multiple rounds of sorting by cycling between the late Golgi and a prevacuolar endosome-like compartment (By similarity).</text>
</comment>
<comment type="subcellular location">
    <subcellularLocation>
        <location evidence="1">Golgi apparatus</location>
        <location evidence="1">trans-Golgi network membrane</location>
        <topology evidence="1">Multi-pass membrane protein</topology>
    </subcellularLocation>
    <subcellularLocation>
        <location evidence="1">Prevacuolar compartment membrane</location>
        <topology evidence="1">Multi-pass membrane protein</topology>
    </subcellularLocation>
    <text evidence="1">Cycles between the Golgi apparatus and the prevacuolar compartment.</text>
</comment>
<comment type="similarity">
    <text evidence="3">Belongs to the VPS10-related sortilin family.</text>
</comment>